<evidence type="ECO:0000255" key="1">
    <source>
        <dbReference type="HAMAP-Rule" id="MF_00045"/>
    </source>
</evidence>
<reference key="1">
    <citation type="journal article" date="2003" name="Genome Res.">
        <title>Tropheryma whipplei twist: a human pathogenic Actinobacteria with a reduced genome.</title>
        <authorList>
            <person name="Raoult D."/>
            <person name="Ogata H."/>
            <person name="Audic S."/>
            <person name="Robert C."/>
            <person name="Suhre K."/>
            <person name="Drancourt M."/>
            <person name="Claverie J.-M."/>
        </authorList>
    </citation>
    <scope>NUCLEOTIDE SEQUENCE [LARGE SCALE GENOMIC DNA]</scope>
    <source>
        <strain>Twist</strain>
    </source>
</reference>
<name>ORN_TROWT</name>
<sequence length="184" mass="20196">MCVAPTPSHLVWVDCEMTGLNPERDELLEVAVVVTDKDLLPLDEGVNVVVSPSSEALGAMDNYVARMHRVSGLLDELSNGVPVSEAQAMVKEYITKHVKTGGIMSGNSIATDRLFITRYMPDVHAILHYRMIDVSSIKELAVRWAPEIYSGAPNKKGGHRAMADVLESIAELAYYREHFLTGTA</sequence>
<accession>Q83GA7</accession>
<feature type="chain" id="PRO_0000111076" description="Oligoribonuclease">
    <location>
        <begin position="1"/>
        <end position="184"/>
    </location>
</feature>
<feature type="domain" description="Exonuclease" evidence="1">
    <location>
        <begin position="10"/>
        <end position="172"/>
    </location>
</feature>
<feature type="active site" evidence="1">
    <location>
        <position position="129"/>
    </location>
</feature>
<protein>
    <recommendedName>
        <fullName evidence="1">Oligoribonuclease</fullName>
        <ecNumber evidence="1">3.1.15.-</ecNumber>
    </recommendedName>
</protein>
<organism>
    <name type="scientific">Tropheryma whipplei (strain Twist)</name>
    <name type="common">Whipple's bacillus</name>
    <dbReference type="NCBI Taxonomy" id="203267"/>
    <lineage>
        <taxon>Bacteria</taxon>
        <taxon>Bacillati</taxon>
        <taxon>Actinomycetota</taxon>
        <taxon>Actinomycetes</taxon>
        <taxon>Micrococcales</taxon>
        <taxon>Tropherymataceae</taxon>
        <taxon>Tropheryma</taxon>
    </lineage>
</organism>
<dbReference type="EC" id="3.1.15.-" evidence="1"/>
<dbReference type="EMBL" id="AE014184">
    <property type="protein sequence ID" value="AAO44503.1"/>
    <property type="molecule type" value="Genomic_DNA"/>
</dbReference>
<dbReference type="RefSeq" id="WP_011102557.1">
    <property type="nucleotide sequence ID" value="NC_004572.3"/>
</dbReference>
<dbReference type="SMR" id="Q83GA7"/>
<dbReference type="STRING" id="203267.TWT_406"/>
<dbReference type="KEGG" id="twh:TWT_406"/>
<dbReference type="eggNOG" id="COG1949">
    <property type="taxonomic scope" value="Bacteria"/>
</dbReference>
<dbReference type="HOGENOM" id="CLU_064761_3_0_11"/>
<dbReference type="OrthoDB" id="9801329at2"/>
<dbReference type="Proteomes" id="UP000002200">
    <property type="component" value="Chromosome"/>
</dbReference>
<dbReference type="GO" id="GO:0005737">
    <property type="term" value="C:cytoplasm"/>
    <property type="evidence" value="ECO:0007669"/>
    <property type="project" value="UniProtKB-SubCell"/>
</dbReference>
<dbReference type="GO" id="GO:0000175">
    <property type="term" value="F:3'-5'-RNA exonuclease activity"/>
    <property type="evidence" value="ECO:0007669"/>
    <property type="project" value="InterPro"/>
</dbReference>
<dbReference type="GO" id="GO:0003676">
    <property type="term" value="F:nucleic acid binding"/>
    <property type="evidence" value="ECO:0007669"/>
    <property type="project" value="InterPro"/>
</dbReference>
<dbReference type="CDD" id="cd06135">
    <property type="entry name" value="Orn"/>
    <property type="match status" value="1"/>
</dbReference>
<dbReference type="Gene3D" id="3.30.420.10">
    <property type="entry name" value="Ribonuclease H-like superfamily/Ribonuclease H"/>
    <property type="match status" value="1"/>
</dbReference>
<dbReference type="HAMAP" id="MF_00045">
    <property type="entry name" value="Oligoribonuclease"/>
    <property type="match status" value="1"/>
</dbReference>
<dbReference type="InterPro" id="IPR013520">
    <property type="entry name" value="Exonuclease_RNaseT/DNA_pol3"/>
</dbReference>
<dbReference type="InterPro" id="IPR022894">
    <property type="entry name" value="Oligoribonuclease"/>
</dbReference>
<dbReference type="InterPro" id="IPR012337">
    <property type="entry name" value="RNaseH-like_sf"/>
</dbReference>
<dbReference type="InterPro" id="IPR036397">
    <property type="entry name" value="RNaseH_sf"/>
</dbReference>
<dbReference type="NCBIfam" id="NF003765">
    <property type="entry name" value="PRK05359.1"/>
    <property type="match status" value="1"/>
</dbReference>
<dbReference type="PANTHER" id="PTHR11046">
    <property type="entry name" value="OLIGORIBONUCLEASE, MITOCHONDRIAL"/>
    <property type="match status" value="1"/>
</dbReference>
<dbReference type="PANTHER" id="PTHR11046:SF0">
    <property type="entry name" value="OLIGORIBONUCLEASE, MITOCHONDRIAL"/>
    <property type="match status" value="1"/>
</dbReference>
<dbReference type="Pfam" id="PF00929">
    <property type="entry name" value="RNase_T"/>
    <property type="match status" value="1"/>
</dbReference>
<dbReference type="SMART" id="SM00479">
    <property type="entry name" value="EXOIII"/>
    <property type="match status" value="1"/>
</dbReference>
<dbReference type="SUPFAM" id="SSF53098">
    <property type="entry name" value="Ribonuclease H-like"/>
    <property type="match status" value="1"/>
</dbReference>
<gene>
    <name evidence="1" type="primary">orn</name>
    <name type="ordered locus">TWT_406</name>
</gene>
<proteinExistence type="inferred from homology"/>
<keyword id="KW-0963">Cytoplasm</keyword>
<keyword id="KW-0269">Exonuclease</keyword>
<keyword id="KW-0378">Hydrolase</keyword>
<keyword id="KW-0540">Nuclease</keyword>
<keyword id="KW-1185">Reference proteome</keyword>
<comment type="function">
    <text evidence="1">3'-to-5' exoribonuclease specific for small oligoribonucleotides.</text>
</comment>
<comment type="subcellular location">
    <subcellularLocation>
        <location evidence="1">Cytoplasm</location>
    </subcellularLocation>
</comment>
<comment type="similarity">
    <text evidence="1">Belongs to the oligoribonuclease family.</text>
</comment>